<sequence>MSQPESYPLLSRIGSPSDLRELPAAELPALAGELRAFLLESVSSTGGHLASNLGTVELTIALHYVFNTPDDRLVWDVGHQSYPHKILTGRREAMPGLRKKGGLAGFPKRAESPYDTFGVGHSSTSISAALGMALAARQLGEDRHAVAIIGDGAMTAGMAFEALNHAGDQKANLLVVLNDNEMSISPNVGAMNNYLARLLSGKVYSTVREGSKRVLDHMPPMREFMRRAEEHMKGMIVPGTLFEELGFNYYGPIDGHDLPSLVKTLKNLRALPGPRLLHVVTRKGHGYAPAEQDPCGYHGVGQFDPSQGLAAGKTPSSPSYTQVFGQWLCDMAEADPRLVGITPAMREGSGLVEFSQRFPERYHDVGIAEQHALTVAAGMACDGLKPVVAIYSTFLQRAYDQLIHDIAIQNLPVLLAIDRAGVVGPDGPTHAGSFDLSYLRCVPNLTVMAPADEDECRRMLSTGFHLDGPAAVRYPRGKGPGAALDPGLDTLPVGKAQLRRKGRGVALLAFGAVLPAALAAAEPLDATVVNMRFVKPLDEALVREMAEGHDLLVTLEDNVVAGGAGSAVAESLAVQGITVPLLHLGLPDRFQEHGSREELLSEAGLDAEGILAAVRARLNDVPSRSGRDDCLSAPTRVISK</sequence>
<protein>
    <recommendedName>
        <fullName evidence="1">1-deoxy-D-xylulose-5-phosphate synthase</fullName>
        <ecNumber evidence="1">2.2.1.7</ecNumber>
    </recommendedName>
    <alternativeName>
        <fullName evidence="1">1-deoxyxylulose-5-phosphate synthase</fullName>
        <shortName evidence="1">DXP synthase</shortName>
        <shortName evidence="1">DXPS</shortName>
    </alternativeName>
</protein>
<evidence type="ECO:0000255" key="1">
    <source>
        <dbReference type="HAMAP-Rule" id="MF_00315"/>
    </source>
</evidence>
<keyword id="KW-0414">Isoprene biosynthesis</keyword>
<keyword id="KW-0460">Magnesium</keyword>
<keyword id="KW-0479">Metal-binding</keyword>
<keyword id="KW-1185">Reference proteome</keyword>
<keyword id="KW-0784">Thiamine biosynthesis</keyword>
<keyword id="KW-0786">Thiamine pyrophosphate</keyword>
<keyword id="KW-0808">Transferase</keyword>
<gene>
    <name evidence="1" type="primary">dxs</name>
    <name type="ordered locus">Tgr7_0832</name>
</gene>
<organism>
    <name type="scientific">Thioalkalivibrio sulfidiphilus (strain HL-EbGR7)</name>
    <dbReference type="NCBI Taxonomy" id="396588"/>
    <lineage>
        <taxon>Bacteria</taxon>
        <taxon>Pseudomonadati</taxon>
        <taxon>Pseudomonadota</taxon>
        <taxon>Gammaproteobacteria</taxon>
        <taxon>Chromatiales</taxon>
        <taxon>Ectothiorhodospiraceae</taxon>
        <taxon>Thioalkalivibrio</taxon>
    </lineage>
</organism>
<proteinExistence type="inferred from homology"/>
<dbReference type="EC" id="2.2.1.7" evidence="1"/>
<dbReference type="EMBL" id="CP001339">
    <property type="protein sequence ID" value="ACL71923.1"/>
    <property type="molecule type" value="Genomic_DNA"/>
</dbReference>
<dbReference type="RefSeq" id="WP_012637411.1">
    <property type="nucleotide sequence ID" value="NC_011901.1"/>
</dbReference>
<dbReference type="SMR" id="B8GN62"/>
<dbReference type="STRING" id="396588.Tgr7_0832"/>
<dbReference type="KEGG" id="tgr:Tgr7_0832"/>
<dbReference type="eggNOG" id="COG1154">
    <property type="taxonomic scope" value="Bacteria"/>
</dbReference>
<dbReference type="HOGENOM" id="CLU_009227_1_4_6"/>
<dbReference type="OrthoDB" id="9803371at2"/>
<dbReference type="UniPathway" id="UPA00064">
    <property type="reaction ID" value="UER00091"/>
</dbReference>
<dbReference type="Proteomes" id="UP000002383">
    <property type="component" value="Chromosome"/>
</dbReference>
<dbReference type="GO" id="GO:0005829">
    <property type="term" value="C:cytosol"/>
    <property type="evidence" value="ECO:0007669"/>
    <property type="project" value="TreeGrafter"/>
</dbReference>
<dbReference type="GO" id="GO:0008661">
    <property type="term" value="F:1-deoxy-D-xylulose-5-phosphate synthase activity"/>
    <property type="evidence" value="ECO:0007669"/>
    <property type="project" value="UniProtKB-UniRule"/>
</dbReference>
<dbReference type="GO" id="GO:0000287">
    <property type="term" value="F:magnesium ion binding"/>
    <property type="evidence" value="ECO:0007669"/>
    <property type="project" value="UniProtKB-UniRule"/>
</dbReference>
<dbReference type="GO" id="GO:0030976">
    <property type="term" value="F:thiamine pyrophosphate binding"/>
    <property type="evidence" value="ECO:0007669"/>
    <property type="project" value="UniProtKB-UniRule"/>
</dbReference>
<dbReference type="GO" id="GO:0052865">
    <property type="term" value="P:1-deoxy-D-xylulose 5-phosphate biosynthetic process"/>
    <property type="evidence" value="ECO:0007669"/>
    <property type="project" value="UniProtKB-UniPathway"/>
</dbReference>
<dbReference type="GO" id="GO:0019288">
    <property type="term" value="P:isopentenyl diphosphate biosynthetic process, methylerythritol 4-phosphate pathway"/>
    <property type="evidence" value="ECO:0007669"/>
    <property type="project" value="TreeGrafter"/>
</dbReference>
<dbReference type="GO" id="GO:0016114">
    <property type="term" value="P:terpenoid biosynthetic process"/>
    <property type="evidence" value="ECO:0007669"/>
    <property type="project" value="UniProtKB-UniRule"/>
</dbReference>
<dbReference type="GO" id="GO:0009228">
    <property type="term" value="P:thiamine biosynthetic process"/>
    <property type="evidence" value="ECO:0007669"/>
    <property type="project" value="UniProtKB-UniRule"/>
</dbReference>
<dbReference type="CDD" id="cd02007">
    <property type="entry name" value="TPP_DXS"/>
    <property type="match status" value="1"/>
</dbReference>
<dbReference type="CDD" id="cd07033">
    <property type="entry name" value="TPP_PYR_DXS_TK_like"/>
    <property type="match status" value="1"/>
</dbReference>
<dbReference type="FunFam" id="3.40.50.920:FF:000002">
    <property type="entry name" value="1-deoxy-D-xylulose-5-phosphate synthase"/>
    <property type="match status" value="1"/>
</dbReference>
<dbReference type="FunFam" id="3.40.50.970:FF:000005">
    <property type="entry name" value="1-deoxy-D-xylulose-5-phosphate synthase"/>
    <property type="match status" value="1"/>
</dbReference>
<dbReference type="Gene3D" id="3.40.50.920">
    <property type="match status" value="1"/>
</dbReference>
<dbReference type="Gene3D" id="3.40.50.970">
    <property type="match status" value="2"/>
</dbReference>
<dbReference type="HAMAP" id="MF_00315">
    <property type="entry name" value="DXP_synth"/>
    <property type="match status" value="1"/>
</dbReference>
<dbReference type="InterPro" id="IPR005477">
    <property type="entry name" value="Dxylulose-5-P_synthase"/>
</dbReference>
<dbReference type="InterPro" id="IPR029061">
    <property type="entry name" value="THDP-binding"/>
</dbReference>
<dbReference type="InterPro" id="IPR009014">
    <property type="entry name" value="Transketo_C/PFOR_II"/>
</dbReference>
<dbReference type="InterPro" id="IPR005475">
    <property type="entry name" value="Transketolase-like_Pyr-bd"/>
</dbReference>
<dbReference type="InterPro" id="IPR020826">
    <property type="entry name" value="Transketolase_BS"/>
</dbReference>
<dbReference type="InterPro" id="IPR033248">
    <property type="entry name" value="Transketolase_C"/>
</dbReference>
<dbReference type="InterPro" id="IPR049557">
    <property type="entry name" value="Transketolase_CS"/>
</dbReference>
<dbReference type="NCBIfam" id="TIGR00204">
    <property type="entry name" value="dxs"/>
    <property type="match status" value="1"/>
</dbReference>
<dbReference type="NCBIfam" id="NF003933">
    <property type="entry name" value="PRK05444.2-2"/>
    <property type="match status" value="1"/>
</dbReference>
<dbReference type="PANTHER" id="PTHR43322">
    <property type="entry name" value="1-D-DEOXYXYLULOSE 5-PHOSPHATE SYNTHASE-RELATED"/>
    <property type="match status" value="1"/>
</dbReference>
<dbReference type="PANTHER" id="PTHR43322:SF5">
    <property type="entry name" value="1-DEOXY-D-XYLULOSE-5-PHOSPHATE SYNTHASE, CHLOROPLASTIC"/>
    <property type="match status" value="1"/>
</dbReference>
<dbReference type="Pfam" id="PF13292">
    <property type="entry name" value="DXP_synthase_N"/>
    <property type="match status" value="1"/>
</dbReference>
<dbReference type="Pfam" id="PF02779">
    <property type="entry name" value="Transket_pyr"/>
    <property type="match status" value="1"/>
</dbReference>
<dbReference type="Pfam" id="PF02780">
    <property type="entry name" value="Transketolase_C"/>
    <property type="match status" value="1"/>
</dbReference>
<dbReference type="SMART" id="SM00861">
    <property type="entry name" value="Transket_pyr"/>
    <property type="match status" value="1"/>
</dbReference>
<dbReference type="SUPFAM" id="SSF52518">
    <property type="entry name" value="Thiamin diphosphate-binding fold (THDP-binding)"/>
    <property type="match status" value="2"/>
</dbReference>
<dbReference type="SUPFAM" id="SSF52922">
    <property type="entry name" value="TK C-terminal domain-like"/>
    <property type="match status" value="1"/>
</dbReference>
<dbReference type="PROSITE" id="PS00801">
    <property type="entry name" value="TRANSKETOLASE_1"/>
    <property type="match status" value="1"/>
</dbReference>
<dbReference type="PROSITE" id="PS00802">
    <property type="entry name" value="TRANSKETOLASE_2"/>
    <property type="match status" value="1"/>
</dbReference>
<name>DXS_THISH</name>
<accession>B8GN62</accession>
<feature type="chain" id="PRO_1000132946" description="1-deoxy-D-xylulose-5-phosphate synthase">
    <location>
        <begin position="1"/>
        <end position="640"/>
    </location>
</feature>
<feature type="binding site" evidence="1">
    <location>
        <position position="79"/>
    </location>
    <ligand>
        <name>thiamine diphosphate</name>
        <dbReference type="ChEBI" id="CHEBI:58937"/>
    </ligand>
</feature>
<feature type="binding site" evidence="1">
    <location>
        <begin position="120"/>
        <end position="122"/>
    </location>
    <ligand>
        <name>thiamine diphosphate</name>
        <dbReference type="ChEBI" id="CHEBI:58937"/>
    </ligand>
</feature>
<feature type="binding site" evidence="1">
    <location>
        <position position="151"/>
    </location>
    <ligand>
        <name>Mg(2+)</name>
        <dbReference type="ChEBI" id="CHEBI:18420"/>
    </ligand>
</feature>
<feature type="binding site" evidence="1">
    <location>
        <begin position="152"/>
        <end position="153"/>
    </location>
    <ligand>
        <name>thiamine diphosphate</name>
        <dbReference type="ChEBI" id="CHEBI:58937"/>
    </ligand>
</feature>
<feature type="binding site" evidence="1">
    <location>
        <position position="180"/>
    </location>
    <ligand>
        <name>Mg(2+)</name>
        <dbReference type="ChEBI" id="CHEBI:18420"/>
    </ligand>
</feature>
<feature type="binding site" evidence="1">
    <location>
        <position position="180"/>
    </location>
    <ligand>
        <name>thiamine diphosphate</name>
        <dbReference type="ChEBI" id="CHEBI:58937"/>
    </ligand>
</feature>
<feature type="binding site" evidence="1">
    <location>
        <position position="287"/>
    </location>
    <ligand>
        <name>thiamine diphosphate</name>
        <dbReference type="ChEBI" id="CHEBI:58937"/>
    </ligand>
</feature>
<feature type="binding site" evidence="1">
    <location>
        <position position="369"/>
    </location>
    <ligand>
        <name>thiamine diphosphate</name>
        <dbReference type="ChEBI" id="CHEBI:58937"/>
    </ligand>
</feature>
<reference key="1">
    <citation type="journal article" date="2011" name="Stand. Genomic Sci.">
        <title>Complete genome sequence of 'Thioalkalivibrio sulfidophilus' HL-EbGr7.</title>
        <authorList>
            <person name="Muyzer G."/>
            <person name="Sorokin D.Y."/>
            <person name="Mavromatis K."/>
            <person name="Lapidus A."/>
            <person name="Clum A."/>
            <person name="Ivanova N."/>
            <person name="Pati A."/>
            <person name="d'Haeseleer P."/>
            <person name="Woyke T."/>
            <person name="Kyrpides N.C."/>
        </authorList>
    </citation>
    <scope>NUCLEOTIDE SEQUENCE [LARGE SCALE GENOMIC DNA]</scope>
    <source>
        <strain>HL-EbGR7</strain>
    </source>
</reference>
<comment type="function">
    <text evidence="1">Catalyzes the acyloin condensation reaction between C atoms 2 and 3 of pyruvate and glyceraldehyde 3-phosphate to yield 1-deoxy-D-xylulose-5-phosphate (DXP).</text>
</comment>
<comment type="catalytic activity">
    <reaction evidence="1">
        <text>D-glyceraldehyde 3-phosphate + pyruvate + H(+) = 1-deoxy-D-xylulose 5-phosphate + CO2</text>
        <dbReference type="Rhea" id="RHEA:12605"/>
        <dbReference type="ChEBI" id="CHEBI:15361"/>
        <dbReference type="ChEBI" id="CHEBI:15378"/>
        <dbReference type="ChEBI" id="CHEBI:16526"/>
        <dbReference type="ChEBI" id="CHEBI:57792"/>
        <dbReference type="ChEBI" id="CHEBI:59776"/>
        <dbReference type="EC" id="2.2.1.7"/>
    </reaction>
</comment>
<comment type="cofactor">
    <cofactor evidence="1">
        <name>Mg(2+)</name>
        <dbReference type="ChEBI" id="CHEBI:18420"/>
    </cofactor>
    <text evidence="1">Binds 1 Mg(2+) ion per subunit.</text>
</comment>
<comment type="cofactor">
    <cofactor evidence="1">
        <name>thiamine diphosphate</name>
        <dbReference type="ChEBI" id="CHEBI:58937"/>
    </cofactor>
    <text evidence="1">Binds 1 thiamine pyrophosphate per subunit.</text>
</comment>
<comment type="pathway">
    <text evidence="1">Metabolic intermediate biosynthesis; 1-deoxy-D-xylulose 5-phosphate biosynthesis; 1-deoxy-D-xylulose 5-phosphate from D-glyceraldehyde 3-phosphate and pyruvate: step 1/1.</text>
</comment>
<comment type="subunit">
    <text evidence="1">Homodimer.</text>
</comment>
<comment type="similarity">
    <text evidence="1">Belongs to the transketolase family. DXPS subfamily.</text>
</comment>